<reference key="1">
    <citation type="submission" date="2003-01" db="EMBL/GenBank/DDBJ databases">
        <title>Chloroplast DNA phylogeny of tribe Heliantheae (Asteraceae).</title>
        <authorList>
            <person name="Panero J.L."/>
            <person name="Baldwin B.G."/>
            <person name="Schilling E.E."/>
            <person name="Clevinger J.A."/>
        </authorList>
    </citation>
    <scope>NUCLEOTIDE SEQUENCE [GENOMIC DNA]</scope>
</reference>
<dbReference type="EC" id="7.1.1.-" evidence="1"/>
<dbReference type="EMBL" id="AF383836">
    <property type="protein sequence ID" value="AAN61777.1"/>
    <property type="molecule type" value="Genomic_DNA"/>
</dbReference>
<dbReference type="SMR" id="Q8HVM7"/>
<dbReference type="GO" id="GO:0009535">
    <property type="term" value="C:chloroplast thylakoid membrane"/>
    <property type="evidence" value="ECO:0007669"/>
    <property type="project" value="UniProtKB-SubCell"/>
</dbReference>
<dbReference type="GO" id="GO:0051539">
    <property type="term" value="F:4 iron, 4 sulfur cluster binding"/>
    <property type="evidence" value="ECO:0007669"/>
    <property type="project" value="UniProtKB-KW"/>
</dbReference>
<dbReference type="GO" id="GO:0005506">
    <property type="term" value="F:iron ion binding"/>
    <property type="evidence" value="ECO:0007669"/>
    <property type="project" value="UniProtKB-UniRule"/>
</dbReference>
<dbReference type="GO" id="GO:0008137">
    <property type="term" value="F:NADH dehydrogenase (ubiquinone) activity"/>
    <property type="evidence" value="ECO:0007669"/>
    <property type="project" value="InterPro"/>
</dbReference>
<dbReference type="GO" id="GO:0048038">
    <property type="term" value="F:quinone binding"/>
    <property type="evidence" value="ECO:0007669"/>
    <property type="project" value="UniProtKB-KW"/>
</dbReference>
<dbReference type="GO" id="GO:0019684">
    <property type="term" value="P:photosynthesis, light reaction"/>
    <property type="evidence" value="ECO:0007669"/>
    <property type="project" value="UniProtKB-UniRule"/>
</dbReference>
<dbReference type="FunFam" id="3.30.70.3270:FF:000006">
    <property type="entry name" value="NAD(P)H-quinone oxidoreductase subunit I, chloroplastic"/>
    <property type="match status" value="1"/>
</dbReference>
<dbReference type="Gene3D" id="3.30.70.3270">
    <property type="match status" value="1"/>
</dbReference>
<dbReference type="HAMAP" id="MF_01351">
    <property type="entry name" value="NDH1_NuoI"/>
    <property type="match status" value="1"/>
</dbReference>
<dbReference type="InterPro" id="IPR017896">
    <property type="entry name" value="4Fe4S_Fe-S-bd"/>
</dbReference>
<dbReference type="InterPro" id="IPR017900">
    <property type="entry name" value="4Fe4S_Fe_S_CS"/>
</dbReference>
<dbReference type="InterPro" id="IPR010226">
    <property type="entry name" value="NADH_quinone_OxRdtase_chainI"/>
</dbReference>
<dbReference type="InterPro" id="IPR004497">
    <property type="entry name" value="NDHI"/>
</dbReference>
<dbReference type="NCBIfam" id="TIGR00403">
    <property type="entry name" value="ndhI"/>
    <property type="match status" value="1"/>
</dbReference>
<dbReference type="NCBIfam" id="TIGR01971">
    <property type="entry name" value="NuoI"/>
    <property type="match status" value="1"/>
</dbReference>
<dbReference type="NCBIfam" id="NF004537">
    <property type="entry name" value="PRK05888.1-3"/>
    <property type="match status" value="1"/>
</dbReference>
<dbReference type="PANTHER" id="PTHR47275">
    <property type="entry name" value="NAD(P)H-QUINONE OXIDOREDUCTASE SUBUNIT I, CHLOROPLASTIC"/>
    <property type="match status" value="1"/>
</dbReference>
<dbReference type="PANTHER" id="PTHR47275:SF1">
    <property type="entry name" value="NAD(P)H-QUINONE OXIDOREDUCTASE SUBUNIT I, CHLOROPLASTIC"/>
    <property type="match status" value="1"/>
</dbReference>
<dbReference type="Pfam" id="PF00037">
    <property type="entry name" value="Fer4"/>
    <property type="match status" value="2"/>
</dbReference>
<dbReference type="SUPFAM" id="SSF54862">
    <property type="entry name" value="4Fe-4S ferredoxins"/>
    <property type="match status" value="1"/>
</dbReference>
<dbReference type="PROSITE" id="PS00198">
    <property type="entry name" value="4FE4S_FER_1"/>
    <property type="match status" value="2"/>
</dbReference>
<dbReference type="PROSITE" id="PS51379">
    <property type="entry name" value="4FE4S_FER_2"/>
    <property type="match status" value="2"/>
</dbReference>
<protein>
    <recommendedName>
        <fullName evidence="1">NAD(P)H-quinone oxidoreductase subunit I, chloroplastic</fullName>
        <ecNumber evidence="1">7.1.1.-</ecNumber>
    </recommendedName>
    <alternativeName>
        <fullName evidence="1">NAD(P)H dehydrogenase subunit I</fullName>
        <shortName evidence="1">NDH subunit I</shortName>
    </alternativeName>
    <alternativeName>
        <fullName evidence="1">NADH-plastoquinone oxidoreductase subunit I</fullName>
    </alternativeName>
</protein>
<gene>
    <name evidence="1" type="primary">ndhI</name>
</gene>
<feature type="chain" id="PRO_0000250834" description="NAD(P)H-quinone oxidoreductase subunit I, chloroplastic">
    <location>
        <begin position="1"/>
        <end position="166"/>
    </location>
</feature>
<feature type="domain" description="4Fe-4S ferredoxin-type 1" evidence="1">
    <location>
        <begin position="55"/>
        <end position="84"/>
    </location>
</feature>
<feature type="domain" description="4Fe-4S ferredoxin-type 2" evidence="1">
    <location>
        <begin position="95"/>
        <end position="124"/>
    </location>
</feature>
<feature type="binding site" evidence="1">
    <location>
        <position position="64"/>
    </location>
    <ligand>
        <name>[4Fe-4S] cluster</name>
        <dbReference type="ChEBI" id="CHEBI:49883"/>
        <label>1</label>
    </ligand>
</feature>
<feature type="binding site" evidence="1">
    <location>
        <position position="67"/>
    </location>
    <ligand>
        <name>[4Fe-4S] cluster</name>
        <dbReference type="ChEBI" id="CHEBI:49883"/>
        <label>1</label>
    </ligand>
</feature>
<feature type="binding site" evidence="1">
    <location>
        <position position="70"/>
    </location>
    <ligand>
        <name>[4Fe-4S] cluster</name>
        <dbReference type="ChEBI" id="CHEBI:49883"/>
        <label>1</label>
    </ligand>
</feature>
<feature type="binding site" evidence="1">
    <location>
        <position position="74"/>
    </location>
    <ligand>
        <name>[4Fe-4S] cluster</name>
        <dbReference type="ChEBI" id="CHEBI:49883"/>
        <label>2</label>
    </ligand>
</feature>
<feature type="binding site" evidence="1">
    <location>
        <position position="104"/>
    </location>
    <ligand>
        <name>[4Fe-4S] cluster</name>
        <dbReference type="ChEBI" id="CHEBI:49883"/>
        <label>2</label>
    </ligand>
</feature>
<feature type="binding site" evidence="1">
    <location>
        <position position="107"/>
    </location>
    <ligand>
        <name>[4Fe-4S] cluster</name>
        <dbReference type="ChEBI" id="CHEBI:49883"/>
        <label>2</label>
    </ligand>
</feature>
<feature type="binding site" evidence="1">
    <location>
        <position position="110"/>
    </location>
    <ligand>
        <name>[4Fe-4S] cluster</name>
        <dbReference type="ChEBI" id="CHEBI:49883"/>
        <label>2</label>
    </ligand>
</feature>
<feature type="binding site" evidence="1">
    <location>
        <position position="114"/>
    </location>
    <ligand>
        <name>[4Fe-4S] cluster</name>
        <dbReference type="ChEBI" id="CHEBI:49883"/>
        <label>1</label>
    </ligand>
</feature>
<name>NDHI_PHIZI</name>
<organism>
    <name type="scientific">Philactis zinnioides</name>
    <dbReference type="NCBI Taxonomy" id="183068"/>
    <lineage>
        <taxon>Eukaryota</taxon>
        <taxon>Viridiplantae</taxon>
        <taxon>Streptophyta</taxon>
        <taxon>Embryophyta</taxon>
        <taxon>Tracheophyta</taxon>
        <taxon>Spermatophyta</taxon>
        <taxon>Magnoliopsida</taxon>
        <taxon>eudicotyledons</taxon>
        <taxon>Gunneridae</taxon>
        <taxon>Pentapetalae</taxon>
        <taxon>asterids</taxon>
        <taxon>campanulids</taxon>
        <taxon>Asterales</taxon>
        <taxon>Asteraceae</taxon>
        <taxon>Asteroideae</taxon>
        <taxon>Heliantheae alliance</taxon>
        <taxon>Heliantheae</taxon>
        <taxon>Philactis</taxon>
    </lineage>
</organism>
<sequence length="166" mass="19509">MFPMVTEFMNYGQQTVRAARYIGQGFMITLSHANRLPVTIQYPYEKLITSERFRGRIHFEFDKCIACEVCVRVCPIDLPVVDWKLETDIRKKRLLNYSIDFGICIFCGNCVEYCPTNCLSMTEEYELSTYDRHELNYNQIALGRLPMSIIDDYTIRTIFNLPEIKT</sequence>
<accession>Q8HVM7</accession>
<geneLocation type="chloroplast"/>
<comment type="function">
    <text evidence="1">NDH shuttles electrons from NAD(P)H:plastoquinone, via FMN and iron-sulfur (Fe-S) centers, to quinones in the photosynthetic chain and possibly in a chloroplast respiratory chain. The immediate electron acceptor for the enzyme in this species is believed to be plastoquinone. Couples the redox reaction to proton translocation, and thus conserves the redox energy in a proton gradient.</text>
</comment>
<comment type="catalytic activity">
    <reaction evidence="1">
        <text>a plastoquinone + NADH + (n+1) H(+)(in) = a plastoquinol + NAD(+) + n H(+)(out)</text>
        <dbReference type="Rhea" id="RHEA:42608"/>
        <dbReference type="Rhea" id="RHEA-COMP:9561"/>
        <dbReference type="Rhea" id="RHEA-COMP:9562"/>
        <dbReference type="ChEBI" id="CHEBI:15378"/>
        <dbReference type="ChEBI" id="CHEBI:17757"/>
        <dbReference type="ChEBI" id="CHEBI:57540"/>
        <dbReference type="ChEBI" id="CHEBI:57945"/>
        <dbReference type="ChEBI" id="CHEBI:62192"/>
    </reaction>
</comment>
<comment type="catalytic activity">
    <reaction evidence="1">
        <text>a plastoquinone + NADPH + (n+1) H(+)(in) = a plastoquinol + NADP(+) + n H(+)(out)</text>
        <dbReference type="Rhea" id="RHEA:42612"/>
        <dbReference type="Rhea" id="RHEA-COMP:9561"/>
        <dbReference type="Rhea" id="RHEA-COMP:9562"/>
        <dbReference type="ChEBI" id="CHEBI:15378"/>
        <dbReference type="ChEBI" id="CHEBI:17757"/>
        <dbReference type="ChEBI" id="CHEBI:57783"/>
        <dbReference type="ChEBI" id="CHEBI:58349"/>
        <dbReference type="ChEBI" id="CHEBI:62192"/>
    </reaction>
</comment>
<comment type="cofactor">
    <cofactor evidence="1">
        <name>[4Fe-4S] cluster</name>
        <dbReference type="ChEBI" id="CHEBI:49883"/>
    </cofactor>
    <text evidence="1">Binds 2 [4Fe-4S] clusters per subunit.</text>
</comment>
<comment type="subunit">
    <text evidence="1">NDH is composed of at least 16 different subunits, 5 of which are encoded in the nucleus.</text>
</comment>
<comment type="subcellular location">
    <subcellularLocation>
        <location evidence="1">Plastid</location>
        <location evidence="1">Chloroplast thylakoid membrane</location>
        <topology evidence="1">Peripheral membrane protein</topology>
    </subcellularLocation>
</comment>
<comment type="similarity">
    <text evidence="1">Belongs to the complex I 23 kDa subunit family.</text>
</comment>
<proteinExistence type="inferred from homology"/>
<evidence type="ECO:0000255" key="1">
    <source>
        <dbReference type="HAMAP-Rule" id="MF_01351"/>
    </source>
</evidence>
<keyword id="KW-0004">4Fe-4S</keyword>
<keyword id="KW-0150">Chloroplast</keyword>
<keyword id="KW-0408">Iron</keyword>
<keyword id="KW-0411">Iron-sulfur</keyword>
<keyword id="KW-0472">Membrane</keyword>
<keyword id="KW-0479">Metal-binding</keyword>
<keyword id="KW-0520">NAD</keyword>
<keyword id="KW-0521">NADP</keyword>
<keyword id="KW-0934">Plastid</keyword>
<keyword id="KW-0618">Plastoquinone</keyword>
<keyword id="KW-0874">Quinone</keyword>
<keyword id="KW-0677">Repeat</keyword>
<keyword id="KW-0793">Thylakoid</keyword>
<keyword id="KW-1278">Translocase</keyword>